<protein>
    <recommendedName>
        <fullName evidence="1">Deoxyribose-phosphate aldolase</fullName>
        <shortName evidence="1">DERA</shortName>
        <ecNumber evidence="1">4.1.2.4</ecNumber>
    </recommendedName>
    <alternativeName>
        <fullName evidence="1">2-deoxy-D-ribose 5-phosphate aldolase</fullName>
    </alternativeName>
    <alternativeName>
        <fullName evidence="1">Phosphodeoxyriboaldolase</fullName>
        <shortName evidence="1">Deoxyriboaldolase</shortName>
    </alternativeName>
</protein>
<proteinExistence type="inferred from homology"/>
<name>DEOC_MYCBT</name>
<dbReference type="EC" id="4.1.2.4" evidence="1"/>
<dbReference type="EMBL" id="AP010918">
    <property type="protein sequence ID" value="BAH24785.1"/>
    <property type="molecule type" value="Genomic_DNA"/>
</dbReference>
<dbReference type="RefSeq" id="WP_003402347.1">
    <property type="nucleotide sequence ID" value="NZ_CP014566.1"/>
</dbReference>
<dbReference type="SMR" id="C1AKF6"/>
<dbReference type="KEGG" id="mbt:JTY_0489"/>
<dbReference type="HOGENOM" id="CLU_053595_0_0_11"/>
<dbReference type="UniPathway" id="UPA00002">
    <property type="reaction ID" value="UER00468"/>
</dbReference>
<dbReference type="GO" id="GO:0005737">
    <property type="term" value="C:cytoplasm"/>
    <property type="evidence" value="ECO:0007669"/>
    <property type="project" value="UniProtKB-SubCell"/>
</dbReference>
<dbReference type="GO" id="GO:0004139">
    <property type="term" value="F:deoxyribose-phosphate aldolase activity"/>
    <property type="evidence" value="ECO:0007669"/>
    <property type="project" value="UniProtKB-UniRule"/>
</dbReference>
<dbReference type="GO" id="GO:0006018">
    <property type="term" value="P:2-deoxyribose 1-phosphate catabolic process"/>
    <property type="evidence" value="ECO:0007669"/>
    <property type="project" value="UniProtKB-UniRule"/>
</dbReference>
<dbReference type="GO" id="GO:0016052">
    <property type="term" value="P:carbohydrate catabolic process"/>
    <property type="evidence" value="ECO:0007669"/>
    <property type="project" value="TreeGrafter"/>
</dbReference>
<dbReference type="GO" id="GO:0009264">
    <property type="term" value="P:deoxyribonucleotide catabolic process"/>
    <property type="evidence" value="ECO:0007669"/>
    <property type="project" value="InterPro"/>
</dbReference>
<dbReference type="CDD" id="cd00959">
    <property type="entry name" value="DeoC"/>
    <property type="match status" value="1"/>
</dbReference>
<dbReference type="FunFam" id="3.20.20.70:FF:000044">
    <property type="entry name" value="Deoxyribose-phosphate aldolase"/>
    <property type="match status" value="1"/>
</dbReference>
<dbReference type="Gene3D" id="3.20.20.70">
    <property type="entry name" value="Aldolase class I"/>
    <property type="match status" value="1"/>
</dbReference>
<dbReference type="HAMAP" id="MF_00114">
    <property type="entry name" value="DeoC_type1"/>
    <property type="match status" value="1"/>
</dbReference>
<dbReference type="InterPro" id="IPR013785">
    <property type="entry name" value="Aldolase_TIM"/>
</dbReference>
<dbReference type="InterPro" id="IPR011343">
    <property type="entry name" value="DeoC"/>
</dbReference>
<dbReference type="InterPro" id="IPR002915">
    <property type="entry name" value="DeoC/FbaB/LacD_aldolase"/>
</dbReference>
<dbReference type="InterPro" id="IPR028581">
    <property type="entry name" value="DeoC_typeI"/>
</dbReference>
<dbReference type="NCBIfam" id="TIGR00126">
    <property type="entry name" value="deoC"/>
    <property type="match status" value="1"/>
</dbReference>
<dbReference type="PANTHER" id="PTHR10889">
    <property type="entry name" value="DEOXYRIBOSE-PHOSPHATE ALDOLASE"/>
    <property type="match status" value="1"/>
</dbReference>
<dbReference type="PANTHER" id="PTHR10889:SF1">
    <property type="entry name" value="DEOXYRIBOSE-PHOSPHATE ALDOLASE"/>
    <property type="match status" value="1"/>
</dbReference>
<dbReference type="Pfam" id="PF01791">
    <property type="entry name" value="DeoC"/>
    <property type="match status" value="1"/>
</dbReference>
<dbReference type="PIRSF" id="PIRSF001357">
    <property type="entry name" value="DeoC"/>
    <property type="match status" value="1"/>
</dbReference>
<dbReference type="SMART" id="SM01133">
    <property type="entry name" value="DeoC"/>
    <property type="match status" value="1"/>
</dbReference>
<dbReference type="SUPFAM" id="SSF51569">
    <property type="entry name" value="Aldolase"/>
    <property type="match status" value="1"/>
</dbReference>
<evidence type="ECO:0000255" key="1">
    <source>
        <dbReference type="HAMAP-Rule" id="MF_00114"/>
    </source>
</evidence>
<feature type="chain" id="PRO_1000119180" description="Deoxyribose-phosphate aldolase">
    <location>
        <begin position="1"/>
        <end position="224"/>
    </location>
</feature>
<feature type="active site" description="Proton donor/acceptor" evidence="1">
    <location>
        <position position="93"/>
    </location>
</feature>
<feature type="active site" description="Schiff-base intermediate with acetaldehyde" evidence="1">
    <location>
        <position position="159"/>
    </location>
</feature>
<feature type="active site" description="Proton donor/acceptor" evidence="1">
    <location>
        <position position="189"/>
    </location>
</feature>
<organism>
    <name type="scientific">Mycobacterium bovis (strain BCG / Tokyo 172 / ATCC 35737 / TMC 1019)</name>
    <dbReference type="NCBI Taxonomy" id="561275"/>
    <lineage>
        <taxon>Bacteria</taxon>
        <taxon>Bacillati</taxon>
        <taxon>Actinomycetota</taxon>
        <taxon>Actinomycetes</taxon>
        <taxon>Mycobacteriales</taxon>
        <taxon>Mycobacteriaceae</taxon>
        <taxon>Mycobacterium</taxon>
        <taxon>Mycobacterium tuberculosis complex</taxon>
    </lineage>
</organism>
<gene>
    <name evidence="1" type="primary">deoC</name>
    <name type="ordered locus">JTY_0489</name>
</gene>
<accession>C1AKF6</accession>
<reference key="1">
    <citation type="journal article" date="2009" name="Vaccine">
        <title>Whole genome sequence analysis of Mycobacterium bovis bacillus Calmette-Guerin (BCG) Tokyo 172: a comparative study of BCG vaccine substrains.</title>
        <authorList>
            <person name="Seki M."/>
            <person name="Honda I."/>
            <person name="Fujita I."/>
            <person name="Yano I."/>
            <person name="Yamamoto S."/>
            <person name="Koyama A."/>
        </authorList>
    </citation>
    <scope>NUCLEOTIDE SEQUENCE [LARGE SCALE GENOMIC DNA]</scope>
    <source>
        <strain>BCG / Tokyo 172 / ATCC 35737 / TMC 1019</strain>
    </source>
</reference>
<comment type="function">
    <text evidence="1">Catalyzes a reversible aldol reaction between acetaldehyde and D-glyceraldehyde 3-phosphate to generate 2-deoxy-D-ribose 5-phosphate.</text>
</comment>
<comment type="catalytic activity">
    <reaction evidence="1">
        <text>2-deoxy-D-ribose 5-phosphate = D-glyceraldehyde 3-phosphate + acetaldehyde</text>
        <dbReference type="Rhea" id="RHEA:12821"/>
        <dbReference type="ChEBI" id="CHEBI:15343"/>
        <dbReference type="ChEBI" id="CHEBI:59776"/>
        <dbReference type="ChEBI" id="CHEBI:62877"/>
        <dbReference type="EC" id="4.1.2.4"/>
    </reaction>
</comment>
<comment type="pathway">
    <text evidence="1">Carbohydrate degradation; 2-deoxy-D-ribose 1-phosphate degradation; D-glyceraldehyde 3-phosphate and acetaldehyde from 2-deoxy-alpha-D-ribose 1-phosphate: step 2/2.</text>
</comment>
<comment type="subcellular location">
    <subcellularLocation>
        <location evidence="1">Cytoplasm</location>
    </subcellularLocation>
</comment>
<comment type="similarity">
    <text evidence="1">Belongs to the DeoC/FbaB aldolase family. DeoC type 1 subfamily.</text>
</comment>
<sequence length="224" mass="22068">MLGQPTRAQLAALVDHTLLKPETTRADVAALVAEAAELGVYAVCVSPSMVPVAVQAGGVRVAAVTGFPSGKHVSSVKAHEAAAALASGASEIDMVIDIGAALCGDIDAVRSDIEAVRAAAAGAVLKVIVESAVLLGQSNAHTLVDACRAAEDAGADFVKTSTGCHPAGGATVRAVELMAETVGPRLGVKASGGIRTAADAVAMLNAGATRLGLSGTRAVLDGLS</sequence>
<keyword id="KW-0963">Cytoplasm</keyword>
<keyword id="KW-0456">Lyase</keyword>
<keyword id="KW-0704">Schiff base</keyword>